<proteinExistence type="evidence at transcript level"/>
<sequence length="890" mass="96700">MANNIIPNVSSGDLVGSTPTFPPNAVVRGDFLYLRDVDGNQIPGRTVSDGDEITVLFISNEKNIVLVQYPTSSGYRQGYVTNATSIIKYKDDYSWVNGSTPEPVYDFDKTTQIGTLDPRERAVVLYKVDGMTYVAYDTGKGKLTKSGLVHYEGSGSSTGGGSFNGVAPGEVVPGGFTYENNAEVVGDELYLRDANGNLIPGRSVSVGDKITVLDVGYTKQLALVQYPAGDVVRQGYVTNATNLIRYFNQYSWHNGSTSEEVLDENGGHLGSLNPYEAATLLYEKNGMKHVVYDTNKGPNTKSGYVKYEGAAATRVDIPYPSITNAQKIVYGISGRGRELAAYKVGNGSNSLVFVCAIHGWEDNWAADGIELTRIGNGLIEHFQNAGTNNWSLYIIPVANPDGLSEGFTNNGPGRCTIVGAVDCNRDFPLGFSPGGVPRYHSGSEPLSVSESKSLHDFIQGVKNRTSGEMCVIDLHGWEGAAIGNPEIGEYFRNQFGFGQRSGYGDNRGFMIGWAKSIGAKAALIELPGSTKSHSDVVNGRYLQKIINAVTNLIGGSGGSSSGGSSFSDVSYEATGEVINVQSFLNVREGAGLYTNSIGQLRQGNKVNIVAKNGDWYKIKYGSEYGYVNSGYIIILKNNTSVKLEDWQEDCIKFGWGPITKEKYLEYMDSTRLYKSIENDISQAIKNKSLINVINPLNFSVSEMIACTQIVFNNETTSFFRDEWYSKSNPNFIVKYKKLSNGQIIVLDRINIKKPEKLKTKIPKAAKGAFKDTIKFEFFKGIDGWFTAISGAISIGSDLSVFQSNGELKSNEDIAKALAAAVIVNGVETMFCAFLGGFIAQCIAPEFPIVAAVAGAIVSAIAAFAIGYFVDNHEKEKYLMNSFKGLIDYLF</sequence>
<gene>
    <name type="primary">bcn</name>
</gene>
<keyword id="KW-0044">Antibiotic</keyword>
<keyword id="KW-0929">Antimicrobial</keyword>
<keyword id="KW-0078">Bacteriocin</keyword>
<keyword id="KW-0614">Plasmid</keyword>
<name>BCN5_CLOPF</name>
<comment type="function">
    <text>May function as an ionophore.</text>
</comment>
<comment type="cofactor">
    <cofactor evidence="2">
        <name>Zn(2+)</name>
        <dbReference type="ChEBI" id="CHEBI:29105"/>
    </cofactor>
</comment>
<comment type="induction">
    <text>By UV irradiation.</text>
</comment>
<geneLocation type="plasmid">
    <name>pIP404</name>
</geneLocation>
<protein>
    <recommendedName>
        <fullName>Bacteriocin BCN5</fullName>
    </recommendedName>
</protein>
<reference key="1">
    <citation type="journal article" date="1988" name="Plasmid">
        <title>Complete nucleotide sequence and genetic organization of the bacteriocinogenic plasmid, pIP404, from Clostridium perfringens.</title>
        <authorList>
            <person name="Garnier T."/>
            <person name="Cole S.T."/>
        </authorList>
    </citation>
    <scope>NUCLEOTIDE SEQUENCE [GENOMIC DNA]</scope>
    <source>
        <strain>CPN50</strain>
    </source>
</reference>
<reference key="2">
    <citation type="journal article" date="1986" name="J. Bacteriol.">
        <title>Characterization of a bacteriocinogenic plasmid from Clostridium perfringens and molecular genetic analysis of the bacteriocin-encoding gene.</title>
        <authorList>
            <person name="Garnier T."/>
            <person name="Cole S.T."/>
        </authorList>
    </citation>
    <scope>NUCLEOTIDE SEQUENCE [GENOMIC DNA]</scope>
    <source>
        <strain>CPN50</strain>
    </source>
</reference>
<reference key="3">
    <citation type="journal article" date="1988" name="Mol. Microbiol.">
        <title>Studies of UV-inducible promoters from Clostridium perfringens in vivo and in vitro.</title>
        <authorList>
            <person name="Garnier T."/>
            <person name="Cole S.T."/>
        </authorList>
    </citation>
    <scope>NUCLEOTIDE SEQUENCE [GENOMIC DNA] OF 1-14</scope>
    <source>
        <strain>CPN50</strain>
    </source>
</reference>
<dbReference type="EMBL" id="M14481">
    <property type="protein sequence ID" value="AAA98248.1"/>
    <property type="molecule type" value="Genomic_DNA"/>
</dbReference>
<dbReference type="EMBL" id="M32882">
    <property type="protein sequence ID" value="AAA98249.1"/>
    <property type="molecule type" value="Genomic_DNA"/>
</dbReference>
<dbReference type="PIR" id="A30481">
    <property type="entry name" value="A30481"/>
</dbReference>
<dbReference type="RefSeq" id="NP_040451.1">
    <property type="nucleotide sequence ID" value="NC_001388.1"/>
</dbReference>
<dbReference type="RefSeq" id="WP_010889923.1">
    <property type="nucleotide sequence ID" value="NC_001388.1"/>
</dbReference>
<dbReference type="SMR" id="P08696"/>
<dbReference type="GO" id="GO:0004181">
    <property type="term" value="F:metallocarboxypeptidase activity"/>
    <property type="evidence" value="ECO:0007669"/>
    <property type="project" value="InterPro"/>
</dbReference>
<dbReference type="GO" id="GO:0008270">
    <property type="term" value="F:zinc ion binding"/>
    <property type="evidence" value="ECO:0007669"/>
    <property type="project" value="InterPro"/>
</dbReference>
<dbReference type="GO" id="GO:0042742">
    <property type="term" value="P:defense response to bacterium"/>
    <property type="evidence" value="ECO:0007669"/>
    <property type="project" value="UniProtKB-KW"/>
</dbReference>
<dbReference type="GO" id="GO:0031640">
    <property type="term" value="P:killing of cells of another organism"/>
    <property type="evidence" value="ECO:0007669"/>
    <property type="project" value="UniProtKB-KW"/>
</dbReference>
<dbReference type="GO" id="GO:0006508">
    <property type="term" value="P:proteolysis"/>
    <property type="evidence" value="ECO:0007669"/>
    <property type="project" value="InterPro"/>
</dbReference>
<dbReference type="Gene3D" id="2.30.30.40">
    <property type="entry name" value="SH3 Domains"/>
    <property type="match status" value="1"/>
</dbReference>
<dbReference type="Gene3D" id="3.40.630.10">
    <property type="entry name" value="Zn peptidases"/>
    <property type="match status" value="1"/>
</dbReference>
<dbReference type="InterPro" id="IPR052354">
    <property type="entry name" value="Cell_Wall_Dynamics_Protein"/>
</dbReference>
<dbReference type="InterPro" id="IPR000834">
    <property type="entry name" value="Peptidase_M14"/>
</dbReference>
<dbReference type="InterPro" id="IPR003646">
    <property type="entry name" value="SH3-like_bac-type"/>
</dbReference>
<dbReference type="PANTHER" id="PTHR34408">
    <property type="entry name" value="FAMILY PROTEIN, PUTATIVE-RELATED"/>
    <property type="match status" value="1"/>
</dbReference>
<dbReference type="PANTHER" id="PTHR34408:SF1">
    <property type="entry name" value="GLYCOSYL HYDROLASE FAMILY 19 DOMAIN-CONTAINING PROTEIN HI_1415"/>
    <property type="match status" value="1"/>
</dbReference>
<dbReference type="Pfam" id="PF00246">
    <property type="entry name" value="Peptidase_M14"/>
    <property type="match status" value="1"/>
</dbReference>
<dbReference type="Pfam" id="PF08239">
    <property type="entry name" value="SH3_3"/>
    <property type="match status" value="1"/>
</dbReference>
<dbReference type="SMART" id="SM00287">
    <property type="entry name" value="SH3b"/>
    <property type="match status" value="3"/>
</dbReference>
<dbReference type="SUPFAM" id="SSF53187">
    <property type="entry name" value="Zn-dependent exopeptidases"/>
    <property type="match status" value="1"/>
</dbReference>
<dbReference type="PROSITE" id="PS52035">
    <property type="entry name" value="PEPTIDASE_M14"/>
    <property type="match status" value="1"/>
</dbReference>
<dbReference type="PROSITE" id="PS51781">
    <property type="entry name" value="SH3B"/>
    <property type="match status" value="3"/>
</dbReference>
<evidence type="ECO:0000255" key="1">
    <source>
        <dbReference type="PROSITE-ProRule" id="PRU01117"/>
    </source>
</evidence>
<evidence type="ECO:0000255" key="2">
    <source>
        <dbReference type="PROSITE-ProRule" id="PRU01379"/>
    </source>
</evidence>
<accession>P08696</accession>
<feature type="chain" id="PRO_0000110576" description="Bacteriocin BCN5">
    <location>
        <begin position="1"/>
        <end position="890"/>
    </location>
</feature>
<feature type="domain" description="SH3b 1" evidence="1">
    <location>
        <begin position="22"/>
        <end position="84"/>
    </location>
</feature>
<feature type="domain" description="SH3b 2" evidence="1">
    <location>
        <begin position="179"/>
        <end position="241"/>
    </location>
</feature>
<feature type="domain" description="Peptidase M14" evidence="2">
    <location>
        <begin position="303"/>
        <end position="549"/>
    </location>
</feature>
<feature type="domain" description="SH3b 3" evidence="1">
    <location>
        <begin position="572"/>
        <end position="636"/>
    </location>
</feature>
<feature type="region of interest" description="Hydrophobic">
    <location>
        <begin position="815"/>
        <end position="869"/>
    </location>
</feature>
<feature type="active site" description="Proton donor/acceptor" evidence="2">
    <location>
        <position position="525"/>
    </location>
</feature>
<feature type="binding site" evidence="2">
    <location>
        <position position="358"/>
    </location>
    <ligand>
        <name>Zn(2+)</name>
        <dbReference type="ChEBI" id="CHEBI:29105"/>
        <note>catalytic</note>
    </ligand>
</feature>
<feature type="binding site" evidence="2">
    <location>
        <position position="361"/>
    </location>
    <ligand>
        <name>Zn(2+)</name>
        <dbReference type="ChEBI" id="CHEBI:29105"/>
        <note>catalytic</note>
    </ligand>
</feature>
<feature type="binding site" evidence="2">
    <location>
        <position position="475"/>
    </location>
    <ligand>
        <name>Zn(2+)</name>
        <dbReference type="ChEBI" id="CHEBI:29105"/>
        <note>catalytic</note>
    </ligand>
</feature>
<organism>
    <name type="scientific">Clostridium perfringens</name>
    <dbReference type="NCBI Taxonomy" id="1502"/>
    <lineage>
        <taxon>Bacteria</taxon>
        <taxon>Bacillati</taxon>
        <taxon>Bacillota</taxon>
        <taxon>Clostridia</taxon>
        <taxon>Eubacteriales</taxon>
        <taxon>Clostridiaceae</taxon>
        <taxon>Clostridium</taxon>
    </lineage>
</organism>